<protein>
    <recommendedName>
        <fullName evidence="1">Ribosomal RNA large subunit methyltransferase K/L</fullName>
    </recommendedName>
    <domain>
        <recommendedName>
            <fullName evidence="1">23S rRNA m2G2445 methyltransferase</fullName>
            <ecNumber evidence="1">2.1.1.173</ecNumber>
        </recommendedName>
        <alternativeName>
            <fullName evidence="1">rRNA (guanine-N(2)-)-methyltransferase RlmL</fullName>
        </alternativeName>
    </domain>
    <domain>
        <recommendedName>
            <fullName evidence="1">23S rRNA m7G2069 methyltransferase</fullName>
            <ecNumber evidence="1">2.1.1.264</ecNumber>
        </recommendedName>
        <alternativeName>
            <fullName evidence="1">rRNA (guanine-N(7)-)-methyltransferase RlmK</fullName>
        </alternativeName>
    </domain>
</protein>
<accession>Q83RX5</accession>
<accession>Q7C273</accession>
<comment type="function">
    <text evidence="1">Specifically methylates the guanine in position 2445 (m2G2445) and the guanine in position 2069 (m7G2069) of 23S rRNA.</text>
</comment>
<comment type="catalytic activity">
    <reaction evidence="1">
        <text>guanosine(2445) in 23S rRNA + S-adenosyl-L-methionine = N(2)-methylguanosine(2445) in 23S rRNA + S-adenosyl-L-homocysteine + H(+)</text>
        <dbReference type="Rhea" id="RHEA:42740"/>
        <dbReference type="Rhea" id="RHEA-COMP:10215"/>
        <dbReference type="Rhea" id="RHEA-COMP:10216"/>
        <dbReference type="ChEBI" id="CHEBI:15378"/>
        <dbReference type="ChEBI" id="CHEBI:57856"/>
        <dbReference type="ChEBI" id="CHEBI:59789"/>
        <dbReference type="ChEBI" id="CHEBI:74269"/>
        <dbReference type="ChEBI" id="CHEBI:74481"/>
        <dbReference type="EC" id="2.1.1.173"/>
    </reaction>
</comment>
<comment type="catalytic activity">
    <reaction evidence="1">
        <text>guanosine(2069) in 23S rRNA + S-adenosyl-L-methionine = N(2)-methylguanosine(2069) in 23S rRNA + S-adenosyl-L-homocysteine + H(+)</text>
        <dbReference type="Rhea" id="RHEA:43772"/>
        <dbReference type="Rhea" id="RHEA-COMP:10688"/>
        <dbReference type="Rhea" id="RHEA-COMP:10689"/>
        <dbReference type="ChEBI" id="CHEBI:15378"/>
        <dbReference type="ChEBI" id="CHEBI:57856"/>
        <dbReference type="ChEBI" id="CHEBI:59789"/>
        <dbReference type="ChEBI" id="CHEBI:74269"/>
        <dbReference type="ChEBI" id="CHEBI:74481"/>
        <dbReference type="EC" id="2.1.1.264"/>
    </reaction>
</comment>
<comment type="subcellular location">
    <subcellularLocation>
        <location evidence="1">Cytoplasm</location>
    </subcellularLocation>
</comment>
<comment type="similarity">
    <text evidence="1">Belongs to the methyltransferase superfamily. RlmKL family.</text>
</comment>
<feature type="chain" id="PRO_0000366839" description="Ribosomal RNA large subunit methyltransferase K/L">
    <location>
        <begin position="1"/>
        <end position="702"/>
    </location>
</feature>
<feature type="domain" description="THUMP" evidence="1">
    <location>
        <begin position="43"/>
        <end position="154"/>
    </location>
</feature>
<proteinExistence type="inferred from homology"/>
<evidence type="ECO:0000255" key="1">
    <source>
        <dbReference type="HAMAP-Rule" id="MF_01858"/>
    </source>
</evidence>
<reference key="1">
    <citation type="journal article" date="2002" name="Nucleic Acids Res.">
        <title>Genome sequence of Shigella flexneri 2a: insights into pathogenicity through comparison with genomes of Escherichia coli K12 and O157.</title>
        <authorList>
            <person name="Jin Q."/>
            <person name="Yuan Z."/>
            <person name="Xu J."/>
            <person name="Wang Y."/>
            <person name="Shen Y."/>
            <person name="Lu W."/>
            <person name="Wang J."/>
            <person name="Liu H."/>
            <person name="Yang J."/>
            <person name="Yang F."/>
            <person name="Zhang X."/>
            <person name="Zhang J."/>
            <person name="Yang G."/>
            <person name="Wu H."/>
            <person name="Qu D."/>
            <person name="Dong J."/>
            <person name="Sun L."/>
            <person name="Xue Y."/>
            <person name="Zhao A."/>
            <person name="Gao Y."/>
            <person name="Zhu J."/>
            <person name="Kan B."/>
            <person name="Ding K."/>
            <person name="Chen S."/>
            <person name="Cheng H."/>
            <person name="Yao Z."/>
            <person name="He B."/>
            <person name="Chen R."/>
            <person name="Ma D."/>
            <person name="Qiang B."/>
            <person name="Wen Y."/>
            <person name="Hou Y."/>
            <person name="Yu J."/>
        </authorList>
    </citation>
    <scope>NUCLEOTIDE SEQUENCE [LARGE SCALE GENOMIC DNA]</scope>
    <source>
        <strain>301 / Serotype 2a</strain>
    </source>
</reference>
<reference key="2">
    <citation type="journal article" date="2003" name="Infect. Immun.">
        <title>Complete genome sequence and comparative genomics of Shigella flexneri serotype 2a strain 2457T.</title>
        <authorList>
            <person name="Wei J."/>
            <person name="Goldberg M.B."/>
            <person name="Burland V."/>
            <person name="Venkatesan M.M."/>
            <person name="Deng W."/>
            <person name="Fournier G."/>
            <person name="Mayhew G.F."/>
            <person name="Plunkett G. III"/>
            <person name="Rose D.J."/>
            <person name="Darling A."/>
            <person name="Mau B."/>
            <person name="Perna N.T."/>
            <person name="Payne S.M."/>
            <person name="Runyen-Janecky L.J."/>
            <person name="Zhou S."/>
            <person name="Schwartz D.C."/>
            <person name="Blattner F.R."/>
        </authorList>
    </citation>
    <scope>NUCLEOTIDE SEQUENCE [LARGE SCALE GENOMIC DNA]</scope>
    <source>
        <strain>ATCC 700930 / 2457T / Serotype 2a</strain>
    </source>
</reference>
<name>RLMKL_SHIFL</name>
<dbReference type="EC" id="2.1.1.173" evidence="1"/>
<dbReference type="EC" id="2.1.1.264" evidence="1"/>
<dbReference type="EMBL" id="AE005674">
    <property type="protein sequence ID" value="AAN42578.1"/>
    <property type="molecule type" value="Genomic_DNA"/>
</dbReference>
<dbReference type="EMBL" id="AE014073">
    <property type="protein sequence ID" value="AAP16462.1"/>
    <property type="molecule type" value="Genomic_DNA"/>
</dbReference>
<dbReference type="RefSeq" id="NP_706871.1">
    <property type="nucleotide sequence ID" value="NC_004337.2"/>
</dbReference>
<dbReference type="SMR" id="Q83RX5"/>
<dbReference type="STRING" id="198214.SF0949"/>
<dbReference type="PaxDb" id="198214-SF0949"/>
<dbReference type="GeneID" id="1023922"/>
<dbReference type="KEGG" id="sfl:SF0949"/>
<dbReference type="KEGG" id="sfx:S1014"/>
<dbReference type="PATRIC" id="fig|198214.7.peg.1106"/>
<dbReference type="HOGENOM" id="CLU_014042_2_0_6"/>
<dbReference type="Proteomes" id="UP000001006">
    <property type="component" value="Chromosome"/>
</dbReference>
<dbReference type="Proteomes" id="UP000002673">
    <property type="component" value="Chromosome"/>
</dbReference>
<dbReference type="GO" id="GO:0005737">
    <property type="term" value="C:cytoplasm"/>
    <property type="evidence" value="ECO:0007669"/>
    <property type="project" value="UniProtKB-SubCell"/>
</dbReference>
<dbReference type="GO" id="GO:0052915">
    <property type="term" value="F:23S rRNA (guanine(2445)-N(2))-methyltransferase activity"/>
    <property type="evidence" value="ECO:0007669"/>
    <property type="project" value="UniProtKB-UniRule"/>
</dbReference>
<dbReference type="GO" id="GO:0003723">
    <property type="term" value="F:RNA binding"/>
    <property type="evidence" value="ECO:0007669"/>
    <property type="project" value="UniProtKB-KW"/>
</dbReference>
<dbReference type="GO" id="GO:0070043">
    <property type="term" value="F:rRNA (guanine-N7-)-methyltransferase activity"/>
    <property type="evidence" value="ECO:0007669"/>
    <property type="project" value="UniProtKB-UniRule"/>
</dbReference>
<dbReference type="CDD" id="cd02440">
    <property type="entry name" value="AdoMet_MTases"/>
    <property type="match status" value="1"/>
</dbReference>
<dbReference type="CDD" id="cd11715">
    <property type="entry name" value="THUMP_AdoMetMT"/>
    <property type="match status" value="1"/>
</dbReference>
<dbReference type="FunFam" id="3.30.750.80:FF:000001">
    <property type="entry name" value="Ribosomal RNA large subunit methyltransferase K/L"/>
    <property type="match status" value="1"/>
</dbReference>
<dbReference type="FunFam" id="3.40.50.150:FF:000039">
    <property type="entry name" value="Ribosomal RNA large subunit methyltransferase K/L"/>
    <property type="match status" value="1"/>
</dbReference>
<dbReference type="Gene3D" id="3.30.2130.30">
    <property type="match status" value="1"/>
</dbReference>
<dbReference type="Gene3D" id="3.30.750.80">
    <property type="entry name" value="RNA methyltransferase domain (HRMD) like"/>
    <property type="match status" value="1"/>
</dbReference>
<dbReference type="Gene3D" id="3.40.50.150">
    <property type="entry name" value="Vaccinia Virus protein VP39"/>
    <property type="match status" value="2"/>
</dbReference>
<dbReference type="HAMAP" id="MF_01858">
    <property type="entry name" value="23SrRNA_methyltr_KL"/>
    <property type="match status" value="1"/>
</dbReference>
<dbReference type="InterPro" id="IPR017244">
    <property type="entry name" value="23SrRNA_methyltr_KL"/>
</dbReference>
<dbReference type="InterPro" id="IPR002052">
    <property type="entry name" value="DNA_methylase_N6_adenine_CS"/>
</dbReference>
<dbReference type="InterPro" id="IPR000241">
    <property type="entry name" value="RlmKL-like_Mtase"/>
</dbReference>
<dbReference type="InterPro" id="IPR053943">
    <property type="entry name" value="RlmKL-like_Mtase_CS"/>
</dbReference>
<dbReference type="InterPro" id="IPR054170">
    <property type="entry name" value="RlmL_1st"/>
</dbReference>
<dbReference type="InterPro" id="IPR019614">
    <property type="entry name" value="SAM-dep_methyl-trfase"/>
</dbReference>
<dbReference type="InterPro" id="IPR029063">
    <property type="entry name" value="SAM-dependent_MTases_sf"/>
</dbReference>
<dbReference type="InterPro" id="IPR004114">
    <property type="entry name" value="THUMP_dom"/>
</dbReference>
<dbReference type="NCBIfam" id="NF008748">
    <property type="entry name" value="PRK11783.1"/>
    <property type="match status" value="1"/>
</dbReference>
<dbReference type="PANTHER" id="PTHR47313">
    <property type="entry name" value="RIBOSOMAL RNA LARGE SUBUNIT METHYLTRANSFERASE K/L"/>
    <property type="match status" value="1"/>
</dbReference>
<dbReference type="PANTHER" id="PTHR47313:SF1">
    <property type="entry name" value="RIBOSOMAL RNA LARGE SUBUNIT METHYLTRANSFERASE K_L"/>
    <property type="match status" value="1"/>
</dbReference>
<dbReference type="Pfam" id="PF10672">
    <property type="entry name" value="Methyltrans_SAM"/>
    <property type="match status" value="1"/>
</dbReference>
<dbReference type="Pfam" id="PF22020">
    <property type="entry name" value="RlmL_1st"/>
    <property type="match status" value="1"/>
</dbReference>
<dbReference type="Pfam" id="PF02926">
    <property type="entry name" value="THUMP"/>
    <property type="match status" value="1"/>
</dbReference>
<dbReference type="Pfam" id="PF01170">
    <property type="entry name" value="UPF0020"/>
    <property type="match status" value="1"/>
</dbReference>
<dbReference type="PIRSF" id="PIRSF037618">
    <property type="entry name" value="RNA_Mtase_bacteria_prd"/>
    <property type="match status" value="1"/>
</dbReference>
<dbReference type="PRINTS" id="PR00507">
    <property type="entry name" value="N12N6MTFRASE"/>
</dbReference>
<dbReference type="SMART" id="SM00981">
    <property type="entry name" value="THUMP"/>
    <property type="match status" value="1"/>
</dbReference>
<dbReference type="SUPFAM" id="SSF53335">
    <property type="entry name" value="S-adenosyl-L-methionine-dependent methyltransferases"/>
    <property type="match status" value="2"/>
</dbReference>
<dbReference type="PROSITE" id="PS51165">
    <property type="entry name" value="THUMP"/>
    <property type="match status" value="1"/>
</dbReference>
<dbReference type="PROSITE" id="PS01261">
    <property type="entry name" value="UPF0020"/>
    <property type="match status" value="1"/>
</dbReference>
<organism>
    <name type="scientific">Shigella flexneri</name>
    <dbReference type="NCBI Taxonomy" id="623"/>
    <lineage>
        <taxon>Bacteria</taxon>
        <taxon>Pseudomonadati</taxon>
        <taxon>Pseudomonadota</taxon>
        <taxon>Gammaproteobacteria</taxon>
        <taxon>Enterobacterales</taxon>
        <taxon>Enterobacteriaceae</taxon>
        <taxon>Shigella</taxon>
    </lineage>
</organism>
<keyword id="KW-0963">Cytoplasm</keyword>
<keyword id="KW-0489">Methyltransferase</keyword>
<keyword id="KW-1185">Reference proteome</keyword>
<keyword id="KW-0694">RNA-binding</keyword>
<keyword id="KW-0698">rRNA processing</keyword>
<keyword id="KW-0949">S-adenosyl-L-methionine</keyword>
<keyword id="KW-0808">Transferase</keyword>
<sequence>MNSLFASTARGLEELLKTELENLGAVECQVVQGGVHFKGDTRLVYQSLMWSRLASRIMLPLGECKVYSDLDLYLGVQAINWTEMFNPGATFAVHFSGLNDTIRNSQYGAMKVKDAIVDAFTRKNLPRPNVDRDAPDIRVNVWLHKETASIALDLSGDGLHLRGYRDRAGIAPIKETLAAAIVMRSGWQSGTPLLDPMCGSGTLLIEAAMLATDRAPGLHRGRWGFSGWAQHDEAIWQEVKAEAQTRARKGLAEYSSHFYGSDSDARVIQRARTNARLAGIGELITFEVKDVAQLTNPLPKGPYGTVLSNPPYGERLDSEPALIALHSLLGRIMKNQFGGWNLSLFSASPDLLSCLQLRADKQYKAKNGPLDCVQKNYHVAESTPDSKPAMVAEDYANRLRKNLKKFEKWARQEGIECYRLYDADLPEYNVAVDRYADWVVVQEYAPPKTIDAHKARQRLFDIIAATISVLGIAPNKLVLKTRERHKGKNQYQKLGEKGEFLEVTEYNAHLWVNLTDYLDTGLFLDHRIARRMLGQMSKGKDFLNLFSYTGSATVHAGLGGARSTTTVDMSRTYLEWAERNLRLNGLTRRAHRLIQADCLAWLREANEQFDLIFIDPPTFSNSKRMEDAFDVQRDHLALMKDLKRLLRAGGTIMFSNNKRGFRMDLDGLAKLGLKAQEITQKTLSQDFARNRQIHNCWLITAA</sequence>
<gene>
    <name evidence="1" type="primary">rlmL</name>
    <name type="ordered locus">SF0949</name>
    <name type="ordered locus">S1014</name>
</gene>